<sequence>MRLYINEIKIKDDILYCYTEDSIKGLSEVGQMLVDSDNYAFAYTLDDGKAYAYLIFVQETWTMLHENTTKKIIINDELELTEFHQELTYILDNIKGNNNYGKEFVATVEETFDIE</sequence>
<evidence type="ECO:0000255" key="1">
    <source>
        <dbReference type="HAMAP-Rule" id="MF_01861"/>
    </source>
</evidence>
<proteinExistence type="inferred from homology"/>
<reference key="1">
    <citation type="journal article" date="2001" name="Lancet">
        <title>Whole genome sequencing of meticillin-resistant Staphylococcus aureus.</title>
        <authorList>
            <person name="Kuroda M."/>
            <person name="Ohta T."/>
            <person name="Uchiyama I."/>
            <person name="Baba T."/>
            <person name="Yuzawa H."/>
            <person name="Kobayashi I."/>
            <person name="Cui L."/>
            <person name="Oguchi A."/>
            <person name="Aoki K."/>
            <person name="Nagai Y."/>
            <person name="Lian J.-Q."/>
            <person name="Ito T."/>
            <person name="Kanamori M."/>
            <person name="Matsumaru H."/>
            <person name="Maruyama A."/>
            <person name="Murakami H."/>
            <person name="Hosoyama A."/>
            <person name="Mizutani-Ui Y."/>
            <person name="Takahashi N.K."/>
            <person name="Sawano T."/>
            <person name="Inoue R."/>
            <person name="Kaito C."/>
            <person name="Sekimizu K."/>
            <person name="Hirakawa H."/>
            <person name="Kuhara S."/>
            <person name="Goto S."/>
            <person name="Yabuzaki J."/>
            <person name="Kanehisa M."/>
            <person name="Yamashita A."/>
            <person name="Oshima K."/>
            <person name="Furuya K."/>
            <person name="Yoshino C."/>
            <person name="Shiba T."/>
            <person name="Hattori M."/>
            <person name="Ogasawara N."/>
            <person name="Hayashi H."/>
            <person name="Hiramatsu K."/>
        </authorList>
    </citation>
    <scope>NUCLEOTIDE SEQUENCE [LARGE SCALE GENOMIC DNA]</scope>
    <source>
        <strain>Mu50 / ATCC 700699</strain>
    </source>
</reference>
<name>Y1005_STAAM</name>
<organism>
    <name type="scientific">Staphylococcus aureus (strain Mu50 / ATCC 700699)</name>
    <dbReference type="NCBI Taxonomy" id="158878"/>
    <lineage>
        <taxon>Bacteria</taxon>
        <taxon>Bacillati</taxon>
        <taxon>Bacillota</taxon>
        <taxon>Bacilli</taxon>
        <taxon>Bacillales</taxon>
        <taxon>Staphylococcaceae</taxon>
        <taxon>Staphylococcus</taxon>
    </lineage>
</organism>
<dbReference type="EMBL" id="BA000017">
    <property type="protein sequence ID" value="BAB57167.1"/>
    <property type="molecule type" value="Genomic_DNA"/>
</dbReference>
<dbReference type="RefSeq" id="WP_001242103.1">
    <property type="nucleotide sequence ID" value="NC_002758.2"/>
</dbReference>
<dbReference type="KEGG" id="sav:SAV1005"/>
<dbReference type="HOGENOM" id="CLU_142282_0_0_9"/>
<dbReference type="Proteomes" id="UP000002481">
    <property type="component" value="Chromosome"/>
</dbReference>
<dbReference type="HAMAP" id="MF_01861">
    <property type="entry name" value="UPF0738"/>
    <property type="match status" value="1"/>
</dbReference>
<dbReference type="InterPro" id="IPR020908">
    <property type="entry name" value="UPF0738"/>
</dbReference>
<dbReference type="Pfam" id="PF19785">
    <property type="entry name" value="UPF0738"/>
    <property type="match status" value="1"/>
</dbReference>
<protein>
    <recommendedName>
        <fullName evidence="1">UPF0738 protein SAV1005</fullName>
    </recommendedName>
</protein>
<gene>
    <name type="ordered locus">SAV1005</name>
</gene>
<accession>Q99V86</accession>
<comment type="similarity">
    <text evidence="1">Belongs to the UPF0738 family.</text>
</comment>
<feature type="chain" id="PRO_0000369664" description="UPF0738 protein SAV1005">
    <location>
        <begin position="1"/>
        <end position="115"/>
    </location>
</feature>